<reference key="1">
    <citation type="journal article" date="1998" name="Science">
        <title>Genome sequence of the nematode C. elegans: a platform for investigating biology.</title>
        <authorList>
            <consortium name="The C. elegans sequencing consortium"/>
        </authorList>
    </citation>
    <scope>NUCLEOTIDE SEQUENCE [LARGE SCALE GENOMIC DNA]</scope>
    <source>
        <strain>Bristol N2</strain>
    </source>
</reference>
<reference key="2">
    <citation type="journal article" date="2012" name="Am. J. Physiol.">
        <title>GCN-2 dependent inhibition of protein synthesis activates osmosensitive gene transcription via WNK and Ste20 kinase signaling.</title>
        <authorList>
            <person name="Lee E.C."/>
            <person name="Strange K."/>
        </authorList>
    </citation>
    <scope>FUNCTION</scope>
    <scope>DISRUPTION PHENOTYPE</scope>
</reference>
<gene>
    <name evidence="3" type="primary">nars-1</name>
    <name evidence="3" type="synonym">nrs-1</name>
    <name evidence="3" type="ORF">F22D6.3</name>
</gene>
<organism>
    <name type="scientific">Caenorhabditis elegans</name>
    <dbReference type="NCBI Taxonomy" id="6239"/>
    <lineage>
        <taxon>Eukaryota</taxon>
        <taxon>Metazoa</taxon>
        <taxon>Ecdysozoa</taxon>
        <taxon>Nematoda</taxon>
        <taxon>Chromadorea</taxon>
        <taxon>Rhabditida</taxon>
        <taxon>Rhabditina</taxon>
        <taxon>Rhabditomorpha</taxon>
        <taxon>Rhabditoidea</taxon>
        <taxon>Rhabditidae</taxon>
        <taxon>Peloderinae</taxon>
        <taxon>Caenorhabditis</taxon>
    </lineage>
</organism>
<feature type="chain" id="PRO_0000176495" description="Asparagine--tRNA ligase, cytoplasmic">
    <location>
        <begin position="1"/>
        <end position="545"/>
    </location>
</feature>
<sequence length="545" mass="61186">MSKLYIDTDAGSDQHPGTEAQPLATLVQAMLISKNSGEFLMKKKSEEGESWEPAAKAAIKKAVKKYEAEVKKLEKAGCREKEAEEAQHAALEEAKKITFSLDKSLPEAKVIKIGESVQHRDQRVSIKAWVHRLRRQGKSLMFLVLRDGYGFLQCVLNDKLCQSYDAVTLSTETSVQVYGIIKALPDGKSAPDGHELTVDYWEVIGKAPAGGIDNVLNESAGVDVMLDNRHLVIRGENASRILRIRAAATRAMRDHFFAAGYTEVAPPTLVQTQVEGGSTLFGLDYYGEPAYLTQSSQLYLETCNAALGDVYCISQSYRAEKSRTRRHLSEYQHVEAECAFITFDQLMDRIEALVCDTVDRLLADPVTKSLIEFVNPGYKAPARPFKRMPYKEAIEWLQKNDVRNEMGEKFVYGEDIAEAAERRMTDTIGVPILLNRFPHGIKAFYMPRCADDNELTESVDLLMPGVGEIVGGSMRIWKEDQLLAAFEKGGLDSKNYYWYMDQRKYGSVPHGGYGLGLERFICWLTDTNHIRDVCLYPRFVGRCAP</sequence>
<keyword id="KW-0030">Aminoacyl-tRNA synthetase</keyword>
<keyword id="KW-0067">ATP-binding</keyword>
<keyword id="KW-0963">Cytoplasm</keyword>
<keyword id="KW-0436">Ligase</keyword>
<keyword id="KW-0547">Nucleotide-binding</keyword>
<keyword id="KW-0648">Protein biosynthesis</keyword>
<keyword id="KW-1185">Reference proteome</keyword>
<comment type="function">
    <text evidence="1 2">Involved in protein synthesis (PubMed:23076791). Catalyzes the specific attachment of an amino acid to its cognate tRNA in a 2 step reaction: the amino acid (AA) is first activated by ATP to form AA-AMP and then transferred to the acceptor end of the tRNA.</text>
</comment>
<comment type="catalytic activity">
    <reaction>
        <text>tRNA(Asn) + L-asparagine + ATP = L-asparaginyl-tRNA(Asn) + AMP + diphosphate + H(+)</text>
        <dbReference type="Rhea" id="RHEA:11180"/>
        <dbReference type="Rhea" id="RHEA-COMP:9659"/>
        <dbReference type="Rhea" id="RHEA-COMP:9674"/>
        <dbReference type="ChEBI" id="CHEBI:15378"/>
        <dbReference type="ChEBI" id="CHEBI:30616"/>
        <dbReference type="ChEBI" id="CHEBI:33019"/>
        <dbReference type="ChEBI" id="CHEBI:58048"/>
        <dbReference type="ChEBI" id="CHEBI:78442"/>
        <dbReference type="ChEBI" id="CHEBI:78515"/>
        <dbReference type="ChEBI" id="CHEBI:456215"/>
        <dbReference type="EC" id="6.1.1.22"/>
    </reaction>
</comment>
<comment type="subcellular location">
    <subcellularLocation>
        <location evidence="2">Cytoplasm</location>
    </subcellularLocation>
</comment>
<comment type="disruption phenotype">
    <text evidence="1">RNAi-mediated knockdown results in an increase in the expression of gpdh-1 independent of hypertonic stress.</text>
</comment>
<comment type="similarity">
    <text evidence="2">Belongs to the class-II aminoacyl-tRNA synthetase family.</text>
</comment>
<proteinExistence type="inferred from homology"/>
<evidence type="ECO:0000269" key="1">
    <source>
    </source>
</evidence>
<evidence type="ECO:0000305" key="2"/>
<evidence type="ECO:0000312" key="3">
    <source>
        <dbReference type="WormBase" id="F22D6.3a"/>
    </source>
</evidence>
<protein>
    <recommendedName>
        <fullName>Asparagine--tRNA ligase, cytoplasmic</fullName>
        <ecNumber>6.1.1.22</ecNumber>
    </recommendedName>
    <alternativeName>
        <fullName>Asparaginyl-tRNA synthetase</fullName>
        <shortName>AsnRS</shortName>
    </alternativeName>
</protein>
<accession>Q19722</accession>
<dbReference type="EC" id="6.1.1.22"/>
<dbReference type="EMBL" id="Z71262">
    <property type="protein sequence ID" value="CAA95808.1"/>
    <property type="molecule type" value="Genomic_DNA"/>
</dbReference>
<dbReference type="PIR" id="T21253">
    <property type="entry name" value="T21253"/>
</dbReference>
<dbReference type="RefSeq" id="NP_001021405.1">
    <property type="nucleotide sequence ID" value="NM_001026234.8"/>
</dbReference>
<dbReference type="SMR" id="Q19722"/>
<dbReference type="BioGRID" id="37887">
    <property type="interactions" value="4"/>
</dbReference>
<dbReference type="FunCoup" id="Q19722">
    <property type="interactions" value="3005"/>
</dbReference>
<dbReference type="STRING" id="6239.F22D6.3a.1"/>
<dbReference type="PaxDb" id="6239-F22D6.3a"/>
<dbReference type="PeptideAtlas" id="Q19722"/>
<dbReference type="EnsemblMetazoa" id="F22D6.3a.1">
    <property type="protein sequence ID" value="F22D6.3a.1"/>
    <property type="gene ID" value="WBGene00003815"/>
</dbReference>
<dbReference type="GeneID" id="172442"/>
<dbReference type="KEGG" id="cel:CELE_F22D6.3"/>
<dbReference type="UCSC" id="F22D6.3a.1">
    <property type="organism name" value="c. elegans"/>
</dbReference>
<dbReference type="AGR" id="WB:WBGene00003815"/>
<dbReference type="CTD" id="172442"/>
<dbReference type="WormBase" id="F22D6.3a">
    <property type="protein sequence ID" value="CE05684"/>
    <property type="gene ID" value="WBGene00003815"/>
    <property type="gene designation" value="nars-1"/>
</dbReference>
<dbReference type="eggNOG" id="KOG0555">
    <property type="taxonomic scope" value="Eukaryota"/>
</dbReference>
<dbReference type="GeneTree" id="ENSGT01030000234618"/>
<dbReference type="HOGENOM" id="CLU_004553_2_10_1"/>
<dbReference type="InParanoid" id="Q19722"/>
<dbReference type="OMA" id="DCCLYPR"/>
<dbReference type="OrthoDB" id="1931232at2759"/>
<dbReference type="PhylomeDB" id="Q19722"/>
<dbReference type="PRO" id="PR:Q19722"/>
<dbReference type="Proteomes" id="UP000001940">
    <property type="component" value="Chromosome I"/>
</dbReference>
<dbReference type="Bgee" id="WBGene00003815">
    <property type="expression patterns" value="Expressed in germ line (C elegans) and 4 other cell types or tissues"/>
</dbReference>
<dbReference type="GO" id="GO:0005737">
    <property type="term" value="C:cytoplasm"/>
    <property type="evidence" value="ECO:0000318"/>
    <property type="project" value="GO_Central"/>
</dbReference>
<dbReference type="GO" id="GO:0004816">
    <property type="term" value="F:asparagine-tRNA ligase activity"/>
    <property type="evidence" value="ECO:0000318"/>
    <property type="project" value="GO_Central"/>
</dbReference>
<dbReference type="GO" id="GO:0005524">
    <property type="term" value="F:ATP binding"/>
    <property type="evidence" value="ECO:0007669"/>
    <property type="project" value="UniProtKB-KW"/>
</dbReference>
<dbReference type="GO" id="GO:0003676">
    <property type="term" value="F:nucleic acid binding"/>
    <property type="evidence" value="ECO:0007669"/>
    <property type="project" value="InterPro"/>
</dbReference>
<dbReference type="GO" id="GO:0006421">
    <property type="term" value="P:asparaginyl-tRNA aminoacylation"/>
    <property type="evidence" value="ECO:0000318"/>
    <property type="project" value="GO_Central"/>
</dbReference>
<dbReference type="GO" id="GO:0006412">
    <property type="term" value="P:translation"/>
    <property type="evidence" value="ECO:0000315"/>
    <property type="project" value="UniProtKB"/>
</dbReference>
<dbReference type="CDD" id="cd04323">
    <property type="entry name" value="AsnRS_cyto_like_N"/>
    <property type="match status" value="1"/>
</dbReference>
<dbReference type="CDD" id="cd00776">
    <property type="entry name" value="AsxRS_core"/>
    <property type="match status" value="1"/>
</dbReference>
<dbReference type="FunFam" id="2.40.50.140:FF:000151">
    <property type="entry name" value="Asparagine--tRNA ligase, cytoplasmic"/>
    <property type="match status" value="1"/>
</dbReference>
<dbReference type="FunFam" id="3.30.930.10:FF:000040">
    <property type="entry name" value="Asparagine--tRNA ligase, cytoplasmic"/>
    <property type="match status" value="1"/>
</dbReference>
<dbReference type="Gene3D" id="3.30.1910.20">
    <property type="entry name" value="asparaginyl-tRNA synthetase, N-terminal domain"/>
    <property type="match status" value="1"/>
</dbReference>
<dbReference type="Gene3D" id="3.30.930.10">
    <property type="entry name" value="Bira Bifunctional Protein, Domain 2"/>
    <property type="match status" value="1"/>
</dbReference>
<dbReference type="Gene3D" id="2.40.50.140">
    <property type="entry name" value="Nucleic acid-binding proteins"/>
    <property type="match status" value="1"/>
</dbReference>
<dbReference type="InterPro" id="IPR004364">
    <property type="entry name" value="Aa-tRNA-synt_II"/>
</dbReference>
<dbReference type="InterPro" id="IPR006195">
    <property type="entry name" value="aa-tRNA-synth_II"/>
</dbReference>
<dbReference type="InterPro" id="IPR045864">
    <property type="entry name" value="aa-tRNA-synth_II/BPL/LPL"/>
</dbReference>
<dbReference type="InterPro" id="IPR004522">
    <property type="entry name" value="Asn-tRNA-ligase"/>
</dbReference>
<dbReference type="InterPro" id="IPR048952">
    <property type="entry name" value="AsnRS_N"/>
</dbReference>
<dbReference type="InterPro" id="IPR002312">
    <property type="entry name" value="Asp/Asn-tRNA-synth_IIb"/>
</dbReference>
<dbReference type="InterPro" id="IPR012340">
    <property type="entry name" value="NA-bd_OB-fold"/>
</dbReference>
<dbReference type="InterPro" id="IPR004365">
    <property type="entry name" value="NA-bd_OB_tRNA"/>
</dbReference>
<dbReference type="NCBIfam" id="TIGR00457">
    <property type="entry name" value="asnS"/>
    <property type="match status" value="1"/>
</dbReference>
<dbReference type="PANTHER" id="PTHR22594:SF16">
    <property type="entry name" value="ASPARAGINE--TRNA LIGASE, CYTOPLASMIC"/>
    <property type="match status" value="1"/>
</dbReference>
<dbReference type="PANTHER" id="PTHR22594">
    <property type="entry name" value="ASPARTYL/LYSYL-TRNA SYNTHETASE"/>
    <property type="match status" value="1"/>
</dbReference>
<dbReference type="Pfam" id="PF20917">
    <property type="entry name" value="AsnRS_N"/>
    <property type="match status" value="1"/>
</dbReference>
<dbReference type="Pfam" id="PF00152">
    <property type="entry name" value="tRNA-synt_2"/>
    <property type="match status" value="1"/>
</dbReference>
<dbReference type="Pfam" id="PF01336">
    <property type="entry name" value="tRNA_anti-codon"/>
    <property type="match status" value="1"/>
</dbReference>
<dbReference type="PRINTS" id="PR01042">
    <property type="entry name" value="TRNASYNTHASP"/>
</dbReference>
<dbReference type="SUPFAM" id="SSF55681">
    <property type="entry name" value="Class II aaRS and biotin synthetases"/>
    <property type="match status" value="1"/>
</dbReference>
<dbReference type="SUPFAM" id="SSF50249">
    <property type="entry name" value="Nucleic acid-binding proteins"/>
    <property type="match status" value="1"/>
</dbReference>
<dbReference type="PROSITE" id="PS50862">
    <property type="entry name" value="AA_TRNA_LIGASE_II"/>
    <property type="match status" value="1"/>
</dbReference>
<name>SYNC_CAEEL</name>